<gene>
    <name evidence="7" type="primary">DMAS1-B</name>
</gene>
<feature type="chain" id="PRO_0000442303" description="Deoxymugineic acid synthase 1-B">
    <location>
        <begin position="1"/>
        <end position="314"/>
    </location>
</feature>
<feature type="region of interest" description="Disordered" evidence="5">
    <location>
        <begin position="1"/>
        <end position="22"/>
    </location>
</feature>
<feature type="active site" description="Proton donor" evidence="2">
    <location>
        <position position="49"/>
    </location>
</feature>
<feature type="binding site" evidence="1">
    <location>
        <position position="44"/>
    </location>
    <ligand>
        <name>NADP(+)</name>
        <dbReference type="ChEBI" id="CHEBI:58349"/>
    </ligand>
</feature>
<feature type="binding site" evidence="2">
    <location>
        <position position="112"/>
    </location>
    <ligand>
        <name>substrate</name>
    </ligand>
</feature>
<feature type="binding site" evidence="1">
    <location>
        <begin position="158"/>
        <end position="159"/>
    </location>
    <ligand>
        <name>NADP(+)</name>
        <dbReference type="ChEBI" id="CHEBI:58349"/>
    </ligand>
</feature>
<feature type="binding site" evidence="1">
    <location>
        <position position="180"/>
    </location>
    <ligand>
        <name>NADP(+)</name>
        <dbReference type="ChEBI" id="CHEBI:58349"/>
    </ligand>
</feature>
<feature type="binding site" evidence="1">
    <location>
        <begin position="258"/>
        <end position="266"/>
    </location>
    <ligand>
        <name>NADP(+)</name>
        <dbReference type="ChEBI" id="CHEBI:58349"/>
    </ligand>
</feature>
<feature type="binding site" evidence="2">
    <location>
        <begin position="273"/>
        <end position="281"/>
    </location>
    <ligand>
        <name>NADP(+)</name>
        <dbReference type="ChEBI" id="CHEBI:58349"/>
    </ligand>
</feature>
<feature type="site" description="Lowers pKa of active site Tyr" evidence="4">
    <location>
        <position position="79"/>
    </location>
</feature>
<protein>
    <recommendedName>
        <fullName evidence="7">Deoxymugineic acid synthase 1-B</fullName>
        <ecNumber evidence="3">1.1.1.285</ecNumber>
    </recommendedName>
</protein>
<organism>
    <name type="scientific">Triticum aestivum</name>
    <name type="common">Wheat</name>
    <dbReference type="NCBI Taxonomy" id="4565"/>
    <lineage>
        <taxon>Eukaryota</taxon>
        <taxon>Viridiplantae</taxon>
        <taxon>Streptophyta</taxon>
        <taxon>Embryophyta</taxon>
        <taxon>Tracheophyta</taxon>
        <taxon>Spermatophyta</taxon>
        <taxon>Magnoliopsida</taxon>
        <taxon>Liliopsida</taxon>
        <taxon>Poales</taxon>
        <taxon>Poaceae</taxon>
        <taxon>BOP clade</taxon>
        <taxon>Pooideae</taxon>
        <taxon>Triticodae</taxon>
        <taxon>Triticeae</taxon>
        <taxon>Triticinae</taxon>
        <taxon>Triticum</taxon>
    </lineage>
</organism>
<name>DMS1B_WHEAT</name>
<accession>A0A1D5XGW0</accession>
<proteinExistence type="evidence at transcript level"/>
<sequence>MGAGDKTAAGMPRIGMGTAVQGPKADPIRRAVLRAIQIGYRHFDTAAHYETEAPIGEAAAEAVRSGAVASRDELFITSKLWCSDAHRDRVVPALRQTLRNLQMEYVDLYLVHWPVSMKPGRFKAPFTAEDFVPFDMRAVWEAMEECHRLGLAKAIGVANFSCKKLETLLSFATIPPTVNQVEVNPVWQQRKLREFCRGKGIQLCAYSPLGAKGTHWGSDAVMDAGVLQEIAASRGKSVAQVCLRWVYEQGDCLIVKSFDEARMRENLDVDGWELTEEERRRIAEIPQRKINLGKRYVSEHGPYKSLEELWDGEI</sequence>
<comment type="function">
    <text evidence="3">Catalyzes the reduction of a 3''-keto intermediate during the biosynthesis of 2'-deoxymugineic acid (DMA) from L-Met. Involved in the formation of phytosiderophores (MAs) belonging to the mugineic acid family and required to acquire iron.</text>
</comment>
<comment type="catalytic activity">
    <reaction evidence="3">
        <text>2'-deoxymugineate + NAD(+) = 3''-deamino-3''-oxonicotianamine + NADH + H(+)</text>
        <dbReference type="Rhea" id="RHEA:16141"/>
        <dbReference type="ChEBI" id="CHEBI:15378"/>
        <dbReference type="ChEBI" id="CHEBI:57540"/>
        <dbReference type="ChEBI" id="CHEBI:57945"/>
        <dbReference type="ChEBI" id="CHEBI:58487"/>
        <dbReference type="ChEBI" id="CHEBI:58685"/>
        <dbReference type="EC" id="1.1.1.285"/>
    </reaction>
</comment>
<comment type="catalytic activity">
    <reaction evidence="3">
        <text>2'-deoxymugineate + NADP(+) = 3''-deamino-3''-oxonicotianamine + NADPH + H(+)</text>
        <dbReference type="Rhea" id="RHEA:16137"/>
        <dbReference type="ChEBI" id="CHEBI:15378"/>
        <dbReference type="ChEBI" id="CHEBI:57783"/>
        <dbReference type="ChEBI" id="CHEBI:58349"/>
        <dbReference type="ChEBI" id="CHEBI:58487"/>
        <dbReference type="ChEBI" id="CHEBI:58685"/>
        <dbReference type="EC" id="1.1.1.285"/>
    </reaction>
</comment>
<comment type="pathway">
    <text evidence="3">Siderophore biosynthesis.</text>
</comment>
<comment type="tissue specificity">
    <text evidence="6">Mostly expressed in root tissues, observed in mesocotyl and embryonic roots, seedling roots, crown and seedling leafes, mature bracts, anthers, pistil, caryopsis and embryos.</text>
</comment>
<comment type="similarity">
    <text evidence="8">Belongs to the aldo/keto reductase family.</text>
</comment>
<dbReference type="EC" id="1.1.1.285" evidence="3"/>
<dbReference type="EMBL" id="KX348552">
    <property type="protein sequence ID" value="ARQ30106.1"/>
    <property type="molecule type" value="Genomic_DNA"/>
</dbReference>
<dbReference type="SMR" id="A0A1D5XGW0"/>
<dbReference type="STRING" id="4565.A0A1D5XGW0"/>
<dbReference type="EnsemblPlants" id="TraesARI4B03G02385080.1">
    <property type="protein sequence ID" value="TraesARI4B03G02385080.1"/>
    <property type="gene ID" value="TraesARI4B03G02385080"/>
</dbReference>
<dbReference type="EnsemblPlants" id="TraesCAD_scaffold_007848_01G000100.1">
    <property type="protein sequence ID" value="TraesCAD_scaffold_007848_01G000100.1"/>
    <property type="gene ID" value="TraesCAD_scaffold_007848_01G000100"/>
</dbReference>
<dbReference type="EnsemblPlants" id="TraesCLE_scaffold_005378_01G000300.1">
    <property type="protein sequence ID" value="TraesCLE_scaffold_005378_01G000300.1"/>
    <property type="gene ID" value="TraesCLE_scaffold_005378_01G000300"/>
</dbReference>
<dbReference type="EnsemblPlants" id="TraesJAG4B03G02345730.1">
    <property type="protein sequence ID" value="TraesJAG4B03G02345730.1"/>
    <property type="gene ID" value="TraesJAG4B03G02345730"/>
</dbReference>
<dbReference type="EnsemblPlants" id="TraesJUL4B03G02366560.1">
    <property type="protein sequence ID" value="TraesJUL4B03G02366560.1"/>
    <property type="gene ID" value="TraesJUL4B03G02366560"/>
</dbReference>
<dbReference type="EnsemblPlants" id="TraesKAR4B01G0324660.1">
    <property type="protein sequence ID" value="cds.TraesKAR4B01G0324660.1"/>
    <property type="gene ID" value="TraesKAR4B01G0324660"/>
</dbReference>
<dbReference type="EnsemblPlants" id="TraesLAC4B03G02301160.1">
    <property type="protein sequence ID" value="TraesLAC4B03G02301160.1"/>
    <property type="gene ID" value="TraesLAC4B03G02301160"/>
</dbReference>
<dbReference type="EnsemblPlants" id="TraesLDM4B03G02348370.1">
    <property type="protein sequence ID" value="TraesLDM4B03G02348370.1"/>
    <property type="gene ID" value="TraesLDM4B03G02348370"/>
</dbReference>
<dbReference type="EnsemblPlants" id="TraesMAC4B03G02347470.1">
    <property type="protein sequence ID" value="TraesMAC4B03G02347470.1"/>
    <property type="gene ID" value="TraesMAC4B03G02347470"/>
</dbReference>
<dbReference type="EnsemblPlants" id="TraesNOR4B03G02365030.1">
    <property type="protein sequence ID" value="TraesNOR4B03G02365030.1"/>
    <property type="gene ID" value="TraesNOR4B03G02365030"/>
</dbReference>
<dbReference type="EnsemblPlants" id="TraesPARA_EIv1.0_1369350.1">
    <property type="protein sequence ID" value="TraesPARA_EIv1.0_1369350.1.CDS"/>
    <property type="gene ID" value="TraesPARA_EIv1.0_1369350"/>
</dbReference>
<dbReference type="EnsemblPlants" id="TraesROB_scaffold_006064_01G000100.1">
    <property type="protein sequence ID" value="TraesROB_scaffold_006064_01G000100.1"/>
    <property type="gene ID" value="TraesROB_scaffold_006064_01G000100"/>
</dbReference>
<dbReference type="EnsemblPlants" id="TraesSTA4B03G02342330.1">
    <property type="protein sequence ID" value="TraesSTA4B03G02342330.1"/>
    <property type="gene ID" value="TraesSTA4B03G02342330"/>
</dbReference>
<dbReference type="EnsemblPlants" id="TraesSYM4B03G02374540.1">
    <property type="protein sequence ID" value="TraesSYM4B03G02374540.1"/>
    <property type="gene ID" value="TraesSYM4B03G02374540"/>
</dbReference>
<dbReference type="EnsemblPlants" id="TraesWEE_scaffold_007000_01G000100.1">
    <property type="protein sequence ID" value="TraesWEE_scaffold_007000_01G000100.1"/>
    <property type="gene ID" value="TraesWEE_scaffold_007000_01G000100"/>
</dbReference>
<dbReference type="Gramene" id="TraesARI4B03G02385080.1">
    <property type="protein sequence ID" value="TraesARI4B03G02385080.1"/>
    <property type="gene ID" value="TraesARI4B03G02385080"/>
</dbReference>
<dbReference type="Gramene" id="TraesCAD_scaffold_007848_01G000100.1">
    <property type="protein sequence ID" value="TraesCAD_scaffold_007848_01G000100.1"/>
    <property type="gene ID" value="TraesCAD_scaffold_007848_01G000100"/>
</dbReference>
<dbReference type="Gramene" id="TraesCLE_scaffold_005378_01G000300.1">
    <property type="protein sequence ID" value="TraesCLE_scaffold_005378_01G000300.1"/>
    <property type="gene ID" value="TraesCLE_scaffold_005378_01G000300"/>
</dbReference>
<dbReference type="Gramene" id="TraesJAG4B03G02345730.1">
    <property type="protein sequence ID" value="TraesJAG4B03G02345730.1"/>
    <property type="gene ID" value="TraesJAG4B03G02345730"/>
</dbReference>
<dbReference type="Gramene" id="TraesJUL4B03G02366560.1">
    <property type="protein sequence ID" value="TraesJUL4B03G02366560.1"/>
    <property type="gene ID" value="TraesJUL4B03G02366560"/>
</dbReference>
<dbReference type="Gramene" id="TraesKAR4B01G0324660.1">
    <property type="protein sequence ID" value="cds.TraesKAR4B01G0324660.1"/>
    <property type="gene ID" value="TraesKAR4B01G0324660"/>
</dbReference>
<dbReference type="Gramene" id="TraesLAC4B03G02301160.1">
    <property type="protein sequence ID" value="TraesLAC4B03G02301160.1"/>
    <property type="gene ID" value="TraesLAC4B03G02301160"/>
</dbReference>
<dbReference type="Gramene" id="TraesLDM4B03G02348370.1">
    <property type="protein sequence ID" value="TraesLDM4B03G02348370.1"/>
    <property type="gene ID" value="TraesLDM4B03G02348370"/>
</dbReference>
<dbReference type="Gramene" id="TraesMAC4B03G02347470.1">
    <property type="protein sequence ID" value="TraesMAC4B03G02347470.1"/>
    <property type="gene ID" value="TraesMAC4B03G02347470"/>
</dbReference>
<dbReference type="Gramene" id="TraesNOR4B03G02365030.1">
    <property type="protein sequence ID" value="TraesNOR4B03G02365030.1"/>
    <property type="gene ID" value="TraesNOR4B03G02365030"/>
</dbReference>
<dbReference type="Gramene" id="TraesPARA_EIv1.0_1369350.1">
    <property type="protein sequence ID" value="TraesPARA_EIv1.0_1369350.1.CDS"/>
    <property type="gene ID" value="TraesPARA_EIv1.0_1369350"/>
</dbReference>
<dbReference type="Gramene" id="TraesROB_scaffold_006064_01G000100.1">
    <property type="protein sequence ID" value="TraesROB_scaffold_006064_01G000100.1"/>
    <property type="gene ID" value="TraesROB_scaffold_006064_01G000100"/>
</dbReference>
<dbReference type="Gramene" id="TraesSTA4B03G02342330.1">
    <property type="protein sequence ID" value="TraesSTA4B03G02342330.1"/>
    <property type="gene ID" value="TraesSTA4B03G02342330"/>
</dbReference>
<dbReference type="Gramene" id="TraesSYM4B03G02374540.1">
    <property type="protein sequence ID" value="TraesSYM4B03G02374540.1"/>
    <property type="gene ID" value="TraesSYM4B03G02374540"/>
</dbReference>
<dbReference type="Gramene" id="TraesWEE_scaffold_007000_01G000100.1">
    <property type="protein sequence ID" value="TraesWEE_scaffold_007000_01G000100.1"/>
    <property type="gene ID" value="TraesWEE_scaffold_007000_01G000100"/>
</dbReference>
<dbReference type="Proteomes" id="UP000019116">
    <property type="component" value="Unplaced"/>
</dbReference>
<dbReference type="ExpressionAtlas" id="A0A1D5XGW0">
    <property type="expression patterns" value="baseline and differential"/>
</dbReference>
<dbReference type="GO" id="GO:0005829">
    <property type="term" value="C:cytosol"/>
    <property type="evidence" value="ECO:0000318"/>
    <property type="project" value="GO_Central"/>
</dbReference>
<dbReference type="GO" id="GO:0033707">
    <property type="term" value="F:3''-deamino-3''-oxonicotianamine reductase activity"/>
    <property type="evidence" value="ECO:0000250"/>
    <property type="project" value="UniProtKB"/>
</dbReference>
<dbReference type="GO" id="GO:0004032">
    <property type="term" value="F:aldose reductase (NADPH) activity"/>
    <property type="evidence" value="ECO:0000318"/>
    <property type="project" value="GO_Central"/>
</dbReference>
<dbReference type="GO" id="GO:1990641">
    <property type="term" value="P:response to iron ion starvation"/>
    <property type="evidence" value="ECO:0000250"/>
    <property type="project" value="UniProtKB"/>
</dbReference>
<dbReference type="GO" id="GO:0019290">
    <property type="term" value="P:siderophore biosynthetic process"/>
    <property type="evidence" value="ECO:0000250"/>
    <property type="project" value="UniProtKB"/>
</dbReference>
<dbReference type="CDD" id="cd19124">
    <property type="entry name" value="AKR_AKR4A_4B"/>
    <property type="match status" value="1"/>
</dbReference>
<dbReference type="FunFam" id="3.20.20.100:FF:000014">
    <property type="entry name" value="NAD(P)-linked oxidoreductase superfamily protein"/>
    <property type="match status" value="1"/>
</dbReference>
<dbReference type="Gene3D" id="3.20.20.100">
    <property type="entry name" value="NADP-dependent oxidoreductase domain"/>
    <property type="match status" value="1"/>
</dbReference>
<dbReference type="InterPro" id="IPR020471">
    <property type="entry name" value="AKR"/>
</dbReference>
<dbReference type="InterPro" id="IPR044497">
    <property type="entry name" value="AKR4A/B"/>
</dbReference>
<dbReference type="InterPro" id="IPR018170">
    <property type="entry name" value="Aldo/ket_reductase_CS"/>
</dbReference>
<dbReference type="InterPro" id="IPR023210">
    <property type="entry name" value="NADP_OxRdtase_dom"/>
</dbReference>
<dbReference type="InterPro" id="IPR036812">
    <property type="entry name" value="NADP_OxRdtase_dom_sf"/>
</dbReference>
<dbReference type="PANTHER" id="PTHR11732">
    <property type="entry name" value="ALDO/KETO REDUCTASE"/>
    <property type="match status" value="1"/>
</dbReference>
<dbReference type="Pfam" id="PF00248">
    <property type="entry name" value="Aldo_ket_red"/>
    <property type="match status" value="1"/>
</dbReference>
<dbReference type="PIRSF" id="PIRSF000097">
    <property type="entry name" value="AKR"/>
    <property type="match status" value="1"/>
</dbReference>
<dbReference type="PRINTS" id="PR00069">
    <property type="entry name" value="ALDKETRDTASE"/>
</dbReference>
<dbReference type="SUPFAM" id="SSF51430">
    <property type="entry name" value="NAD(P)-linked oxidoreductase"/>
    <property type="match status" value="1"/>
</dbReference>
<dbReference type="PROSITE" id="PS00798">
    <property type="entry name" value="ALDOKETO_REDUCTASE_1"/>
    <property type="match status" value="1"/>
</dbReference>
<dbReference type="PROSITE" id="PS00063">
    <property type="entry name" value="ALDOKETO_REDUCTASE_3"/>
    <property type="match status" value="1"/>
</dbReference>
<evidence type="ECO:0000250" key="1">
    <source>
        <dbReference type="UniProtKB" id="O43488"/>
    </source>
</evidence>
<evidence type="ECO:0000250" key="2">
    <source>
        <dbReference type="UniProtKB" id="Q8CG76"/>
    </source>
</evidence>
<evidence type="ECO:0000250" key="3">
    <source>
        <dbReference type="UniProtKB" id="W5DYE3"/>
    </source>
</evidence>
<evidence type="ECO:0000255" key="4">
    <source>
        <dbReference type="PIRSR" id="PIRSR000097-3"/>
    </source>
</evidence>
<evidence type="ECO:0000256" key="5">
    <source>
        <dbReference type="SAM" id="MobiDB-lite"/>
    </source>
</evidence>
<evidence type="ECO:0000269" key="6">
    <source>
    </source>
</evidence>
<evidence type="ECO:0000303" key="7">
    <source>
    </source>
</evidence>
<evidence type="ECO:0000305" key="8"/>
<keyword id="KW-0408">Iron</keyword>
<keyword id="KW-0521">NADP</keyword>
<keyword id="KW-0560">Oxidoreductase</keyword>
<keyword id="KW-1185">Reference proteome</keyword>
<reference key="1">
    <citation type="journal article" date="2017" name="PLoS ONE">
        <title>Characterisation of the nicotianamine aminotransferase and deoxymugineic acid synthase genes essential to Strategy II iron uptake in bread wheat (Triticum aestivum L.).</title>
        <authorList>
            <person name="Beasley J.T."/>
            <person name="Bonneau J.P."/>
            <person name="Johnson A.A.T."/>
        </authorList>
    </citation>
    <scope>NUCLEOTIDE SEQUENCE [GENOMIC DNA]</scope>
    <scope>TISSUE SPECIFICITY</scope>
    <source>
        <strain>cv. Gladius</strain>
    </source>
</reference>
<reference key="2">
    <citation type="journal article" date="2012" name="Nature">
        <title>Analysis of the bread wheat genome using whole-genome shotgun sequencing.</title>
        <authorList>
            <person name="Brenchley R."/>
            <person name="Spannagl M."/>
            <person name="Pfeifer M."/>
            <person name="Barker G.L."/>
            <person name="D'Amore R."/>
            <person name="Allen A.M."/>
            <person name="McKenzie N."/>
            <person name="Kramer M."/>
            <person name="Kerhornou A."/>
            <person name="Bolser D."/>
            <person name="Kay S."/>
            <person name="Waite D."/>
            <person name="Trick M."/>
            <person name="Bancroft I."/>
            <person name="Gu Y."/>
            <person name="Huo N."/>
            <person name="Luo M.C."/>
            <person name="Sehgal S."/>
            <person name="Gill B."/>
            <person name="Kianian S."/>
            <person name="Anderson O."/>
            <person name="Kersey P."/>
            <person name="Dvorak J."/>
            <person name="McCombie W.R."/>
            <person name="Hall A."/>
            <person name="Mayer K.F."/>
            <person name="Edwards K.J."/>
            <person name="Bevan M.W."/>
            <person name="Hall N."/>
        </authorList>
    </citation>
    <scope>NUCLEOTIDE SEQUENCE [LARGE SCALE GENOMIC DNA]</scope>
    <source>
        <strain>cv. Chinese Spring</strain>
    </source>
</reference>